<evidence type="ECO:0000255" key="1"/>
<evidence type="ECO:0000305" key="2"/>
<organism>
    <name type="scientific">Human herpesvirus 6B (strain Z29)</name>
    <name type="common">HHV-6 variant B</name>
    <name type="synonym">Human B lymphotropic virus</name>
    <dbReference type="NCBI Taxonomy" id="36351"/>
    <lineage>
        <taxon>Viruses</taxon>
        <taxon>Duplodnaviria</taxon>
        <taxon>Heunggongvirae</taxon>
        <taxon>Peploviricota</taxon>
        <taxon>Herviviricetes</taxon>
        <taxon>Herpesvirales</taxon>
        <taxon>Orthoherpesviridae</taxon>
        <taxon>Betaherpesvirinae</taxon>
        <taxon>Roseolovirus</taxon>
        <taxon>Roseolovirus humanbeta6b</taxon>
        <taxon>Human herpesvirus 6B</taxon>
    </lineage>
</organism>
<sequence length="57" mass="6344">MLLISKTLFPIPRSAEELWEGTYTLVVAFVLAFLVYSDYLSNLSPFGEILSSPCIST</sequence>
<proteinExistence type="predicted"/>
<accession>Q9QJ41</accession>
<name>U24A_HHV6Z</name>
<dbReference type="EMBL" id="AF157706">
    <property type="protein sequence ID" value="AAD49638.1"/>
    <property type="molecule type" value="Genomic_DNA"/>
</dbReference>
<dbReference type="RefSeq" id="NP_050205.1">
    <property type="nucleotide sequence ID" value="NC_000898.1"/>
</dbReference>
<dbReference type="SMR" id="Q9QJ41"/>
<dbReference type="DNASU" id="1497026"/>
<dbReference type="GeneID" id="1497026"/>
<dbReference type="KEGG" id="vg:1497026"/>
<dbReference type="Proteomes" id="UP000006930">
    <property type="component" value="Segment"/>
</dbReference>
<dbReference type="GO" id="GO:0033644">
    <property type="term" value="C:host cell membrane"/>
    <property type="evidence" value="ECO:0007669"/>
    <property type="project" value="UniProtKB-SubCell"/>
</dbReference>
<dbReference type="GO" id="GO:0016020">
    <property type="term" value="C:membrane"/>
    <property type="evidence" value="ECO:0007669"/>
    <property type="project" value="UniProtKB-KW"/>
</dbReference>
<reference key="1">
    <citation type="journal article" date="1999" name="J. Virol.">
        <title>Human herpesvirus 6B genome sequence: coding content and comparison with human herpesvirus 6A.</title>
        <authorList>
            <person name="Dominguez G."/>
            <person name="Dambaugh T.R."/>
            <person name="Stamey F.R."/>
            <person name="Dewhurst S."/>
            <person name="Inoue N."/>
            <person name="Pellett P.E."/>
        </authorList>
    </citation>
    <scope>NUCLEOTIDE SEQUENCE [LARGE SCALE GENOMIC DNA]</scope>
</reference>
<keyword id="KW-1043">Host membrane</keyword>
<keyword id="KW-0472">Membrane</keyword>
<keyword id="KW-1185">Reference proteome</keyword>
<keyword id="KW-0812">Transmembrane</keyword>
<keyword id="KW-1133">Transmembrane helix</keyword>
<comment type="subcellular location">
    <subcellularLocation>
        <location evidence="2">Host membrane</location>
        <topology evidence="2">Single-pass membrane protein</topology>
    </subcellularLocation>
</comment>
<protein>
    <recommendedName>
        <fullName>Uncharacterized protein U24A</fullName>
    </recommendedName>
</protein>
<gene>
    <name type="primary">U24A</name>
</gene>
<organismHost>
    <name type="scientific">Homo sapiens</name>
    <name type="common">Human</name>
    <dbReference type="NCBI Taxonomy" id="9606"/>
</organismHost>
<feature type="chain" id="PRO_0000408426" description="Uncharacterized protein U24A">
    <location>
        <begin position="1"/>
        <end position="57"/>
    </location>
</feature>
<feature type="transmembrane region" description="Helical" evidence="1">
    <location>
        <begin position="21"/>
        <end position="37"/>
    </location>
</feature>